<organism>
    <name type="scientific">Lacticaseibacillus paracasei (strain ATCC 334 / BCRC 17002 / CCUG 31169 / CIP 107868 / KCTC 3260 / NRRL B-441)</name>
    <name type="common">Lactobacillus paracasei</name>
    <dbReference type="NCBI Taxonomy" id="321967"/>
    <lineage>
        <taxon>Bacteria</taxon>
        <taxon>Bacillati</taxon>
        <taxon>Bacillota</taxon>
        <taxon>Bacilli</taxon>
        <taxon>Lactobacillales</taxon>
        <taxon>Lactobacillaceae</taxon>
        <taxon>Lacticaseibacillus</taxon>
    </lineage>
</organism>
<reference key="1">
    <citation type="journal article" date="2006" name="Proc. Natl. Acad. Sci. U.S.A.">
        <title>Comparative genomics of the lactic acid bacteria.</title>
        <authorList>
            <person name="Makarova K.S."/>
            <person name="Slesarev A."/>
            <person name="Wolf Y.I."/>
            <person name="Sorokin A."/>
            <person name="Mirkin B."/>
            <person name="Koonin E.V."/>
            <person name="Pavlov A."/>
            <person name="Pavlova N."/>
            <person name="Karamychev V."/>
            <person name="Polouchine N."/>
            <person name="Shakhova V."/>
            <person name="Grigoriev I."/>
            <person name="Lou Y."/>
            <person name="Rohksar D."/>
            <person name="Lucas S."/>
            <person name="Huang K."/>
            <person name="Goodstein D.M."/>
            <person name="Hawkins T."/>
            <person name="Plengvidhya V."/>
            <person name="Welker D."/>
            <person name="Hughes J."/>
            <person name="Goh Y."/>
            <person name="Benson A."/>
            <person name="Baldwin K."/>
            <person name="Lee J.-H."/>
            <person name="Diaz-Muniz I."/>
            <person name="Dosti B."/>
            <person name="Smeianov V."/>
            <person name="Wechter W."/>
            <person name="Barabote R."/>
            <person name="Lorca G."/>
            <person name="Altermann E."/>
            <person name="Barrangou R."/>
            <person name="Ganesan B."/>
            <person name="Xie Y."/>
            <person name="Rawsthorne H."/>
            <person name="Tamir D."/>
            <person name="Parker C."/>
            <person name="Breidt F."/>
            <person name="Broadbent J.R."/>
            <person name="Hutkins R."/>
            <person name="O'Sullivan D."/>
            <person name="Steele J."/>
            <person name="Unlu G."/>
            <person name="Saier M.H. Jr."/>
            <person name="Klaenhammer T."/>
            <person name="Richardson P."/>
            <person name="Kozyavkin S."/>
            <person name="Weimer B.C."/>
            <person name="Mills D.A."/>
        </authorList>
    </citation>
    <scope>NUCLEOTIDE SEQUENCE [LARGE SCALE GENOMIC DNA]</scope>
    <source>
        <strain>ATCC 334 / BCRC 17002 / CCUG 31169 / CIP 107868 / KCTC 3260 / NRRL B-441</strain>
    </source>
</reference>
<gene>
    <name type="ordered locus">LSEI_1479</name>
</gene>
<protein>
    <recommendedName>
        <fullName evidence="1">UPF0398 protein LSEI_1479</fullName>
    </recommendedName>
</protein>
<accession>Q038W6</accession>
<keyword id="KW-1185">Reference proteome</keyword>
<name>Y1479_LACP3</name>
<proteinExistence type="inferred from homology"/>
<evidence type="ECO:0000255" key="1">
    <source>
        <dbReference type="HAMAP-Rule" id="MF_01575"/>
    </source>
</evidence>
<comment type="similarity">
    <text evidence="1">Belongs to the UPF0398 family.</text>
</comment>
<sequence>MVGKRLWVTGYRAYELNVFGSNDPKLKVLKTSLKNTLMQFLDEGLEWLITGGQLGVEQWAVEVALGLKPLYPDFKIAMMVPFTDFGKQWNEDNQGQLAALRGQVDFSDAVSQAPYQQPAQLQGYTRFITIHTDAALLVYDPEFPGKAKWDYQAAEAMADRRDYPVQLITMDDLEETAQAMAEAENEHFQND</sequence>
<feature type="chain" id="PRO_0000382545" description="UPF0398 protein LSEI_1479">
    <location>
        <begin position="1"/>
        <end position="191"/>
    </location>
</feature>
<dbReference type="EMBL" id="CP000423">
    <property type="protein sequence ID" value="ABJ70256.1"/>
    <property type="molecule type" value="Genomic_DNA"/>
</dbReference>
<dbReference type="RefSeq" id="WP_011674516.1">
    <property type="nucleotide sequence ID" value="NC_008526.1"/>
</dbReference>
<dbReference type="RefSeq" id="YP_806698.1">
    <property type="nucleotide sequence ID" value="NC_008526.1"/>
</dbReference>
<dbReference type="SMR" id="Q038W6"/>
<dbReference type="STRING" id="321967.LSEI_1479"/>
<dbReference type="PaxDb" id="321967-LSEI_1479"/>
<dbReference type="KEGG" id="lca:LSEI_1479"/>
<dbReference type="PATRIC" id="fig|321967.11.peg.1459"/>
<dbReference type="HOGENOM" id="CLU_105319_0_0_9"/>
<dbReference type="Proteomes" id="UP000001651">
    <property type="component" value="Chromosome"/>
</dbReference>
<dbReference type="Gene3D" id="3.40.50.450">
    <property type="match status" value="1"/>
</dbReference>
<dbReference type="HAMAP" id="MF_01575">
    <property type="entry name" value="UPF0398"/>
    <property type="match status" value="1"/>
</dbReference>
<dbReference type="InterPro" id="IPR010697">
    <property type="entry name" value="YspA"/>
</dbReference>
<dbReference type="NCBIfam" id="NF010181">
    <property type="entry name" value="PRK13660.1"/>
    <property type="match status" value="1"/>
</dbReference>
<dbReference type="PANTHER" id="PTHR38440:SF1">
    <property type="entry name" value="UPF0398 PROTEIN SPR0331"/>
    <property type="match status" value="1"/>
</dbReference>
<dbReference type="PANTHER" id="PTHR38440">
    <property type="entry name" value="UPF0398 PROTEIN YPSA"/>
    <property type="match status" value="1"/>
</dbReference>
<dbReference type="Pfam" id="PF06908">
    <property type="entry name" value="YpsA"/>
    <property type="match status" value="1"/>
</dbReference>
<dbReference type="PIRSF" id="PIRSF021290">
    <property type="entry name" value="DUF1273"/>
    <property type="match status" value="1"/>
</dbReference>
<dbReference type="SUPFAM" id="SSF102405">
    <property type="entry name" value="MCP/YpsA-like"/>
    <property type="match status" value="1"/>
</dbReference>